<name>MT2_SHEEP</name>
<evidence type="ECO:0000250" key="1">
    <source>
        <dbReference type="UniProtKB" id="P02795"/>
    </source>
</evidence>
<evidence type="ECO:0000250" key="2">
    <source>
        <dbReference type="UniProtKB" id="P68301"/>
    </source>
</evidence>
<evidence type="ECO:0000305" key="3"/>
<comment type="function">
    <text>Metallothioneins have a high content of cysteine residues that bind various heavy metals; these proteins are transcriptionally regulated by both heavy metals and glucocorticoids.</text>
</comment>
<comment type="subunit">
    <text evidence="1">Interacts with EOLA1.</text>
</comment>
<comment type="domain">
    <text>Class I metallothioneins contain 2 metal-binding domains: four divalent ions are chelated within cluster A of the alpha domain and are coordinated via cysteinyl thiolate bridges to 11 cysteine ligands. Cluster B, the corresponding region within the beta domain, can ligate three divalent ions to 9 cysteines.</text>
</comment>
<comment type="similarity">
    <text evidence="3">Belongs to the metallothionein superfamily. Type 1 family.</text>
</comment>
<gene>
    <name type="primary">MT2A</name>
    <name type="synonym">MT2</name>
</gene>
<sequence>MDPNCSCTAGESCTCAGSCKCKDCKCASCKKSCCSCCPVGCAKCAQGCVCKGASDKCSCCA</sequence>
<protein>
    <recommendedName>
        <fullName>Metallothionein-2</fullName>
        <shortName>MT-2</shortName>
    </recommendedName>
    <alternativeName>
        <fullName>Metallothionein-II</fullName>
        <shortName>MT-II</shortName>
    </alternativeName>
</protein>
<organism>
    <name type="scientific">Ovis aries</name>
    <name type="common">Sheep</name>
    <dbReference type="NCBI Taxonomy" id="9940"/>
    <lineage>
        <taxon>Eukaryota</taxon>
        <taxon>Metazoa</taxon>
        <taxon>Chordata</taxon>
        <taxon>Craniata</taxon>
        <taxon>Vertebrata</taxon>
        <taxon>Euteleostomi</taxon>
        <taxon>Mammalia</taxon>
        <taxon>Eutheria</taxon>
        <taxon>Laurasiatheria</taxon>
        <taxon>Artiodactyla</taxon>
        <taxon>Ruminantia</taxon>
        <taxon>Pecora</taxon>
        <taxon>Bovidae</taxon>
        <taxon>Caprinae</taxon>
        <taxon>Ovis</taxon>
    </lineage>
</organism>
<feature type="chain" id="PRO_0000197230" description="Metallothionein-2">
    <location>
        <begin position="1"/>
        <end position="61"/>
    </location>
</feature>
<feature type="region of interest" description="Beta">
    <location>
        <begin position="1"/>
        <end position="29"/>
    </location>
</feature>
<feature type="region of interest" description="Alpha">
    <location>
        <begin position="30"/>
        <end position="61"/>
    </location>
</feature>
<feature type="binding site" evidence="1">
    <location>
        <position position="5"/>
    </location>
    <ligand>
        <name>a divalent metal cation</name>
        <dbReference type="ChEBI" id="CHEBI:60240"/>
        <label>1</label>
        <note>in cluster B</note>
    </ligand>
</feature>
<feature type="binding site" evidence="1">
    <location>
        <position position="7"/>
    </location>
    <ligand>
        <name>a divalent metal cation</name>
        <dbReference type="ChEBI" id="CHEBI:60240"/>
        <label>1</label>
        <note>in cluster B</note>
    </ligand>
</feature>
<feature type="binding site" evidence="1">
    <location>
        <position position="7"/>
    </location>
    <ligand>
        <name>a divalent metal cation</name>
        <dbReference type="ChEBI" id="CHEBI:60240"/>
        <label>2</label>
        <note>in cluster B</note>
    </ligand>
</feature>
<feature type="binding site" evidence="1">
    <location>
        <position position="13"/>
    </location>
    <ligand>
        <name>a divalent metal cation</name>
        <dbReference type="ChEBI" id="CHEBI:60240"/>
        <label>2</label>
        <note>in cluster B</note>
    </ligand>
</feature>
<feature type="binding site" evidence="1">
    <location>
        <position position="15"/>
    </location>
    <ligand>
        <name>a divalent metal cation</name>
        <dbReference type="ChEBI" id="CHEBI:60240"/>
        <label>2</label>
        <note>in cluster B</note>
    </ligand>
</feature>
<feature type="binding site" evidence="1">
    <location>
        <position position="15"/>
    </location>
    <ligand>
        <name>a divalent metal cation</name>
        <dbReference type="ChEBI" id="CHEBI:60240"/>
        <label>3</label>
        <note>in cluster B</note>
    </ligand>
</feature>
<feature type="binding site" evidence="1">
    <location>
        <position position="19"/>
    </location>
    <ligand>
        <name>a divalent metal cation</name>
        <dbReference type="ChEBI" id="CHEBI:60240"/>
        <label>3</label>
        <note>in cluster B</note>
    </ligand>
</feature>
<feature type="binding site" evidence="1">
    <location>
        <position position="21"/>
    </location>
    <ligand>
        <name>a divalent metal cation</name>
        <dbReference type="ChEBI" id="CHEBI:60240"/>
        <label>1</label>
        <note>in cluster B</note>
    </ligand>
</feature>
<feature type="binding site" evidence="1">
    <location>
        <position position="24"/>
    </location>
    <ligand>
        <name>a divalent metal cation</name>
        <dbReference type="ChEBI" id="CHEBI:60240"/>
        <label>1</label>
        <note>in cluster B</note>
    </ligand>
</feature>
<feature type="binding site" evidence="1">
    <location>
        <position position="24"/>
    </location>
    <ligand>
        <name>a divalent metal cation</name>
        <dbReference type="ChEBI" id="CHEBI:60240"/>
        <label>3</label>
        <note>in cluster B</note>
    </ligand>
</feature>
<feature type="binding site" evidence="1">
    <location>
        <position position="26"/>
    </location>
    <ligand>
        <name>a divalent metal cation</name>
        <dbReference type="ChEBI" id="CHEBI:60240"/>
        <label>2</label>
        <note>in cluster B</note>
    </ligand>
</feature>
<feature type="binding site" evidence="1">
    <location>
        <position position="29"/>
    </location>
    <ligand>
        <name>a divalent metal cation</name>
        <dbReference type="ChEBI" id="CHEBI:60240"/>
        <label>3</label>
        <note>in cluster B</note>
    </ligand>
</feature>
<feature type="binding site" evidence="1">
    <location>
        <position position="33"/>
    </location>
    <ligand>
        <name>a divalent metal cation</name>
        <dbReference type="ChEBI" id="CHEBI:60240"/>
        <label>4</label>
        <note>in cluster A</note>
    </ligand>
</feature>
<feature type="binding site" evidence="1">
    <location>
        <position position="34"/>
    </location>
    <ligand>
        <name>a divalent metal cation</name>
        <dbReference type="ChEBI" id="CHEBI:60240"/>
        <label>4</label>
        <note>in cluster A</note>
    </ligand>
</feature>
<feature type="binding site" evidence="1">
    <location>
        <position position="34"/>
    </location>
    <ligand>
        <name>a divalent metal cation</name>
        <dbReference type="ChEBI" id="CHEBI:60240"/>
        <label>5</label>
        <note>in cluster A</note>
    </ligand>
</feature>
<feature type="binding site" evidence="1">
    <location>
        <position position="36"/>
    </location>
    <ligand>
        <name>a divalent metal cation</name>
        <dbReference type="ChEBI" id="CHEBI:60240"/>
        <label>5</label>
        <note>in cluster A</note>
    </ligand>
</feature>
<feature type="binding site" evidence="1">
    <location>
        <position position="37"/>
    </location>
    <ligand>
        <name>a divalent metal cation</name>
        <dbReference type="ChEBI" id="CHEBI:60240"/>
        <label>5</label>
        <note>in cluster A</note>
    </ligand>
</feature>
<feature type="binding site" evidence="1">
    <location>
        <position position="37"/>
    </location>
    <ligand>
        <name>a divalent metal cation</name>
        <dbReference type="ChEBI" id="CHEBI:60240"/>
        <label>6</label>
        <note>in cluster A</note>
    </ligand>
</feature>
<feature type="binding site" evidence="1">
    <location>
        <position position="41"/>
    </location>
    <ligand>
        <name>a divalent metal cation</name>
        <dbReference type="ChEBI" id="CHEBI:60240"/>
        <label>6</label>
        <note>in cluster A</note>
    </ligand>
</feature>
<feature type="binding site" evidence="1">
    <location>
        <position position="44"/>
    </location>
    <ligand>
        <name>a divalent metal cation</name>
        <dbReference type="ChEBI" id="CHEBI:60240"/>
        <label>4</label>
        <note>in cluster A</note>
    </ligand>
</feature>
<feature type="binding site" evidence="1">
    <location>
        <position position="44"/>
    </location>
    <ligand>
        <name>a divalent metal cation</name>
        <dbReference type="ChEBI" id="CHEBI:60240"/>
        <label>6</label>
        <note>in cluster A</note>
    </ligand>
</feature>
<feature type="binding site" evidence="1">
    <location>
        <position position="48"/>
    </location>
    <ligand>
        <name>a divalent metal cation</name>
        <dbReference type="ChEBI" id="CHEBI:60240"/>
        <label>4</label>
        <note>in cluster A</note>
    </ligand>
</feature>
<feature type="binding site" evidence="1">
    <location>
        <position position="50"/>
    </location>
    <ligand>
        <name>a divalent metal cation</name>
        <dbReference type="ChEBI" id="CHEBI:60240"/>
        <label>5</label>
        <note>in cluster A</note>
    </ligand>
</feature>
<feature type="binding site" evidence="1">
    <location>
        <position position="50"/>
    </location>
    <ligand>
        <name>a divalent metal cation</name>
        <dbReference type="ChEBI" id="CHEBI:60240"/>
        <label>7</label>
        <note>in cluster A</note>
    </ligand>
</feature>
<feature type="binding site" evidence="1">
    <location>
        <position position="57"/>
    </location>
    <ligand>
        <name>a divalent metal cation</name>
        <dbReference type="ChEBI" id="CHEBI:60240"/>
        <label>7</label>
        <note>in cluster A</note>
    </ligand>
</feature>
<feature type="binding site" evidence="1">
    <location>
        <position position="59"/>
    </location>
    <ligand>
        <name>a divalent metal cation</name>
        <dbReference type="ChEBI" id="CHEBI:60240"/>
        <label>7</label>
        <note>in cluster A</note>
    </ligand>
</feature>
<feature type="binding site" evidence="1">
    <location>
        <position position="60"/>
    </location>
    <ligand>
        <name>a divalent metal cation</name>
        <dbReference type="ChEBI" id="CHEBI:60240"/>
        <label>6</label>
        <note>in cluster A</note>
    </ligand>
</feature>
<feature type="binding site" evidence="1">
    <location>
        <position position="60"/>
    </location>
    <ligand>
        <name>a divalent metal cation</name>
        <dbReference type="ChEBI" id="CHEBI:60240"/>
        <label>7</label>
        <note>in cluster A</note>
    </ligand>
</feature>
<feature type="modified residue" description="N-acetylmethionine" evidence="2">
    <location>
        <position position="1"/>
    </location>
</feature>
<feature type="modified residue" description="Phosphoserine" evidence="1">
    <location>
        <position position="58"/>
    </location>
</feature>
<accession>P68302</accession>
<accession>P09579</accession>
<keyword id="KW-0007">Acetylation</keyword>
<keyword id="KW-0479">Metal-binding</keyword>
<keyword id="KW-0480">Metal-thiolate cluster</keyword>
<keyword id="KW-0597">Phosphoprotein</keyword>
<keyword id="KW-1185">Reference proteome</keyword>
<dbReference type="EMBL" id="X07975">
    <property type="protein sequence ID" value="CAA30787.1"/>
    <property type="molecule type" value="Genomic_DNA"/>
</dbReference>
<dbReference type="PIR" id="S00811">
    <property type="entry name" value="S00811"/>
</dbReference>
<dbReference type="SMR" id="P68302"/>
<dbReference type="STRING" id="9940.ENSOARP00000019691"/>
<dbReference type="PaxDb" id="9940-ENSOARP00000019691"/>
<dbReference type="Ensembl" id="ENSOART00025013152">
    <property type="protein sequence ID" value="ENSOARP00025006597"/>
    <property type="gene ID" value="ENSOARG00025007965"/>
</dbReference>
<dbReference type="Ensembl" id="ENSOART00040040581">
    <property type="protein sequence ID" value="ENSOARP00040021019"/>
    <property type="gene ID" value="ENSOARG00040024368"/>
</dbReference>
<dbReference type="Ensembl" id="ENSOART00180007805">
    <property type="protein sequence ID" value="ENSOARP00180003937"/>
    <property type="gene ID" value="ENSOARG00180004828"/>
</dbReference>
<dbReference type="Ensembl" id="ENSOART00185041612">
    <property type="protein sequence ID" value="ENSOARP00185020597"/>
    <property type="gene ID" value="ENSOARG00185025281"/>
</dbReference>
<dbReference type="Ensembl" id="ENSOART00215049931">
    <property type="protein sequence ID" value="ENSOARP00215025859"/>
    <property type="gene ID" value="ENSOARG00215029897"/>
</dbReference>
<dbReference type="Ensembl" id="ENSOART00220024847">
    <property type="protein sequence ID" value="ENSOARP00220013659"/>
    <property type="gene ID" value="ENSOARG00220014949"/>
</dbReference>
<dbReference type="Ensembl" id="ENSOART00225007912">
    <property type="protein sequence ID" value="ENSOARP00225003713"/>
    <property type="gene ID" value="ENSOARG00225004834"/>
</dbReference>
<dbReference type="GeneID" id="101117955"/>
<dbReference type="KEGG" id="oas:101117955"/>
<dbReference type="eggNOG" id="KOG4738">
    <property type="taxonomic scope" value="Eukaryota"/>
</dbReference>
<dbReference type="HOGENOM" id="CLU_171204_2_0_1"/>
<dbReference type="OMA" id="SEDCSCF"/>
<dbReference type="Proteomes" id="UP000002356">
    <property type="component" value="Chromosome 14"/>
</dbReference>
<dbReference type="Bgee" id="ENSOARG00000018343">
    <property type="expression patterns" value="Expressed in metanephros cortex and 52 other cell types or tissues"/>
</dbReference>
<dbReference type="GO" id="GO:0005737">
    <property type="term" value="C:cytoplasm"/>
    <property type="evidence" value="ECO:0000250"/>
    <property type="project" value="UniProtKB"/>
</dbReference>
<dbReference type="GO" id="GO:0005634">
    <property type="term" value="C:nucleus"/>
    <property type="evidence" value="ECO:0000250"/>
    <property type="project" value="UniProtKB"/>
</dbReference>
<dbReference type="GO" id="GO:0008270">
    <property type="term" value="F:zinc ion binding"/>
    <property type="evidence" value="ECO:0000250"/>
    <property type="project" value="UniProtKB"/>
</dbReference>
<dbReference type="GO" id="GO:0071276">
    <property type="term" value="P:cellular response to cadmium ion"/>
    <property type="evidence" value="ECO:0007669"/>
    <property type="project" value="Ensembl"/>
</dbReference>
<dbReference type="GO" id="GO:0071280">
    <property type="term" value="P:cellular response to copper ion"/>
    <property type="evidence" value="ECO:0007669"/>
    <property type="project" value="TreeGrafter"/>
</dbReference>
<dbReference type="GO" id="GO:0036018">
    <property type="term" value="P:cellular response to erythropoietin"/>
    <property type="evidence" value="ECO:0007669"/>
    <property type="project" value="Ensembl"/>
</dbReference>
<dbReference type="GO" id="GO:0071294">
    <property type="term" value="P:cellular response to zinc ion"/>
    <property type="evidence" value="ECO:0000250"/>
    <property type="project" value="UniProtKB"/>
</dbReference>
<dbReference type="GO" id="GO:0010273">
    <property type="term" value="P:detoxification of copper ion"/>
    <property type="evidence" value="ECO:0007669"/>
    <property type="project" value="TreeGrafter"/>
</dbReference>
<dbReference type="GO" id="GO:0006882">
    <property type="term" value="P:intracellular zinc ion homeostasis"/>
    <property type="evidence" value="ECO:0007669"/>
    <property type="project" value="TreeGrafter"/>
</dbReference>
<dbReference type="GO" id="GO:0045926">
    <property type="term" value="P:negative regulation of growth"/>
    <property type="evidence" value="ECO:0000250"/>
    <property type="project" value="UniProtKB"/>
</dbReference>
<dbReference type="FunFam" id="4.10.10.10:FF:000001">
    <property type="entry name" value="Metallothionein"/>
    <property type="match status" value="1"/>
</dbReference>
<dbReference type="Gene3D" id="4.10.10.10">
    <property type="entry name" value="Metallothionein Isoform II"/>
    <property type="match status" value="1"/>
</dbReference>
<dbReference type="InterPro" id="IPR017854">
    <property type="entry name" value="Metalthion_dom_sf"/>
</dbReference>
<dbReference type="InterPro" id="IPR023587">
    <property type="entry name" value="Metalthion_dom_sf_vert"/>
</dbReference>
<dbReference type="InterPro" id="IPR000006">
    <property type="entry name" value="Metalthion_vert"/>
</dbReference>
<dbReference type="InterPro" id="IPR018064">
    <property type="entry name" value="Metalthion_vert_metal_BS"/>
</dbReference>
<dbReference type="PANTHER" id="PTHR23299">
    <property type="entry name" value="METALLOTHIONEIN"/>
    <property type="match status" value="1"/>
</dbReference>
<dbReference type="PANTHER" id="PTHR23299:SF59">
    <property type="entry name" value="METALLOTHIONEIN-1B"/>
    <property type="match status" value="1"/>
</dbReference>
<dbReference type="Pfam" id="PF00131">
    <property type="entry name" value="Metallothio"/>
    <property type="match status" value="1"/>
</dbReference>
<dbReference type="PRINTS" id="PR00860">
    <property type="entry name" value="MTVERTEBRATE"/>
</dbReference>
<dbReference type="SUPFAM" id="SSF57868">
    <property type="entry name" value="Metallothionein"/>
    <property type="match status" value="1"/>
</dbReference>
<dbReference type="PROSITE" id="PS00203">
    <property type="entry name" value="METALLOTHIONEIN_VRT"/>
    <property type="match status" value="1"/>
</dbReference>
<reference key="1">
    <citation type="journal article" date="1988" name="Eur. J. Biochem.">
        <title>The sheep metallothionein gene family. Structure, sequence and evolutionary relationship of five linked genes.</title>
        <authorList>
            <person name="Peterson M.G."/>
            <person name="Hannan F."/>
            <person name="Mercer J.F.B."/>
        </authorList>
    </citation>
    <scope>NUCLEOTIDE SEQUENCE [GENOMIC DNA]</scope>
</reference>
<proteinExistence type="inferred from homology"/>